<sequence length="147" mass="16426">MTGKKSPNGLFAARKLRRKRLKFRWSEREFKIRMLGLKKKYDPLEGAPMARGIVLEKVGVEARQPNSAVRKCVRVQLIKNGRIVTAFVPGDGGLLVVDEHDEVLIEGIGGPRGRSMGDIPGVRYRVVTVNGVSLRAILEGRKQKPQR</sequence>
<gene>
    <name evidence="1" type="primary">rps12</name>
    <name type="ordered locus">Hbut_1578</name>
</gene>
<reference key="1">
    <citation type="journal article" date="2007" name="Archaea">
        <title>The genome of Hyperthermus butylicus: a sulfur-reducing, peptide fermenting, neutrophilic Crenarchaeote growing up to 108 degrees C.</title>
        <authorList>
            <person name="Bruegger K."/>
            <person name="Chen L."/>
            <person name="Stark M."/>
            <person name="Zibat A."/>
            <person name="Redder P."/>
            <person name="Ruepp A."/>
            <person name="Awayez M."/>
            <person name="She Q."/>
            <person name="Garrett R.A."/>
            <person name="Klenk H.-P."/>
        </authorList>
    </citation>
    <scope>NUCLEOTIDE SEQUENCE [LARGE SCALE GENOMIC DNA]</scope>
    <source>
        <strain>DSM 5456 / JCM 9403 / PLM1-5</strain>
    </source>
</reference>
<dbReference type="EMBL" id="CP000493">
    <property type="protein sequence ID" value="ABM81399.1"/>
    <property type="molecule type" value="Genomic_DNA"/>
</dbReference>
<dbReference type="RefSeq" id="WP_011822717.1">
    <property type="nucleotide sequence ID" value="NC_008818.1"/>
</dbReference>
<dbReference type="SMR" id="A2BN38"/>
<dbReference type="STRING" id="415426.Hbut_1578"/>
<dbReference type="EnsemblBacteria" id="ABM81399">
    <property type="protein sequence ID" value="ABM81399"/>
    <property type="gene ID" value="Hbut_1578"/>
</dbReference>
<dbReference type="GeneID" id="4781860"/>
<dbReference type="KEGG" id="hbu:Hbut_1578"/>
<dbReference type="eggNOG" id="arCOG04255">
    <property type="taxonomic scope" value="Archaea"/>
</dbReference>
<dbReference type="HOGENOM" id="CLU_115574_0_1_2"/>
<dbReference type="OrthoDB" id="45154at2157"/>
<dbReference type="Proteomes" id="UP000002593">
    <property type="component" value="Chromosome"/>
</dbReference>
<dbReference type="GO" id="GO:0015935">
    <property type="term" value="C:small ribosomal subunit"/>
    <property type="evidence" value="ECO:0007669"/>
    <property type="project" value="InterPro"/>
</dbReference>
<dbReference type="GO" id="GO:0019843">
    <property type="term" value="F:rRNA binding"/>
    <property type="evidence" value="ECO:0007669"/>
    <property type="project" value="UniProtKB-UniRule"/>
</dbReference>
<dbReference type="GO" id="GO:0003735">
    <property type="term" value="F:structural constituent of ribosome"/>
    <property type="evidence" value="ECO:0007669"/>
    <property type="project" value="InterPro"/>
</dbReference>
<dbReference type="GO" id="GO:0006412">
    <property type="term" value="P:translation"/>
    <property type="evidence" value="ECO:0007669"/>
    <property type="project" value="UniProtKB-UniRule"/>
</dbReference>
<dbReference type="CDD" id="cd03367">
    <property type="entry name" value="Ribosomal_S23"/>
    <property type="match status" value="1"/>
</dbReference>
<dbReference type="FunFam" id="2.40.50.140:FF:000007">
    <property type="entry name" value="40S ribosomal protein S23"/>
    <property type="match status" value="1"/>
</dbReference>
<dbReference type="Gene3D" id="2.40.50.140">
    <property type="entry name" value="Nucleic acid-binding proteins"/>
    <property type="match status" value="1"/>
</dbReference>
<dbReference type="HAMAP" id="MF_00403_A">
    <property type="entry name" value="Ribosomal_uS12_A"/>
    <property type="match status" value="1"/>
</dbReference>
<dbReference type="InterPro" id="IPR012340">
    <property type="entry name" value="NA-bd_OB-fold"/>
</dbReference>
<dbReference type="InterPro" id="IPR006032">
    <property type="entry name" value="Ribosomal_uS12"/>
</dbReference>
<dbReference type="InterPro" id="IPR022863">
    <property type="entry name" value="Ribosomal_uS12_arc"/>
</dbReference>
<dbReference type="InterPro" id="IPR005680">
    <property type="entry name" value="Ribosomal_uS12_euk/arc"/>
</dbReference>
<dbReference type="NCBIfam" id="NF003254">
    <property type="entry name" value="PRK04211.1"/>
    <property type="match status" value="1"/>
</dbReference>
<dbReference type="NCBIfam" id="TIGR00982">
    <property type="entry name" value="uS12_E_A"/>
    <property type="match status" value="1"/>
</dbReference>
<dbReference type="PANTHER" id="PTHR11652">
    <property type="entry name" value="30S RIBOSOMAL PROTEIN S12 FAMILY MEMBER"/>
    <property type="match status" value="1"/>
</dbReference>
<dbReference type="Pfam" id="PF00164">
    <property type="entry name" value="Ribosom_S12_S23"/>
    <property type="match status" value="1"/>
</dbReference>
<dbReference type="PIRSF" id="PIRSF002133">
    <property type="entry name" value="Ribosomal_S12/S23"/>
    <property type="match status" value="1"/>
</dbReference>
<dbReference type="SUPFAM" id="SSF50249">
    <property type="entry name" value="Nucleic acid-binding proteins"/>
    <property type="match status" value="1"/>
</dbReference>
<dbReference type="PROSITE" id="PS00055">
    <property type="entry name" value="RIBOSOMAL_S12"/>
    <property type="match status" value="1"/>
</dbReference>
<organism>
    <name type="scientific">Hyperthermus butylicus (strain DSM 5456 / JCM 9403 / PLM1-5)</name>
    <dbReference type="NCBI Taxonomy" id="415426"/>
    <lineage>
        <taxon>Archaea</taxon>
        <taxon>Thermoproteota</taxon>
        <taxon>Thermoprotei</taxon>
        <taxon>Desulfurococcales</taxon>
        <taxon>Pyrodictiaceae</taxon>
        <taxon>Hyperthermus</taxon>
    </lineage>
</organism>
<comment type="function">
    <text evidence="1">With S4 and S5 plays an important role in translational accuracy. Located at the interface of the 30S and 50S subunits.</text>
</comment>
<comment type="subunit">
    <text evidence="1">Part of the 30S ribosomal subunit.</text>
</comment>
<comment type="similarity">
    <text evidence="1">Belongs to the universal ribosomal protein uS12 family.</text>
</comment>
<keyword id="KW-1185">Reference proteome</keyword>
<keyword id="KW-0687">Ribonucleoprotein</keyword>
<keyword id="KW-0689">Ribosomal protein</keyword>
<keyword id="KW-0694">RNA-binding</keyword>
<keyword id="KW-0699">rRNA-binding</keyword>
<accession>A2BN38</accession>
<name>RS12_HYPBU</name>
<feature type="chain" id="PRO_0000296047" description="Small ribosomal subunit protein uS12">
    <location>
        <begin position="1"/>
        <end position="147"/>
    </location>
</feature>
<evidence type="ECO:0000255" key="1">
    <source>
        <dbReference type="HAMAP-Rule" id="MF_00403"/>
    </source>
</evidence>
<evidence type="ECO:0000305" key="2"/>
<protein>
    <recommendedName>
        <fullName evidence="1">Small ribosomal subunit protein uS12</fullName>
    </recommendedName>
    <alternativeName>
        <fullName evidence="2">30S ribosomal protein S12</fullName>
    </alternativeName>
</protein>
<proteinExistence type="inferred from homology"/>